<dbReference type="SMR" id="Q5DRE6"/>
<dbReference type="FunCoup" id="Q5DRE6">
    <property type="interactions" value="43"/>
</dbReference>
<dbReference type="GlyCosmos" id="Q5DRE6">
    <property type="glycosylation" value="4 sites, No reported glycans"/>
</dbReference>
<dbReference type="PaxDb" id="9598-ENSPTRP00000047963"/>
<dbReference type="Ensembl" id="ENSPTRT00000055455.5">
    <property type="protein sequence ID" value="ENSPTRP00000047963.5"/>
    <property type="gene ID" value="ENSPTRG00000017328.7"/>
</dbReference>
<dbReference type="eggNOG" id="KOG3594">
    <property type="taxonomic scope" value="Eukaryota"/>
</dbReference>
<dbReference type="GeneTree" id="ENSGT00940000160554"/>
<dbReference type="InParanoid" id="Q5DRE6"/>
<dbReference type="Proteomes" id="UP000002277">
    <property type="component" value="Chromosome 5"/>
</dbReference>
<dbReference type="Bgee" id="ENSPTRG00000017328">
    <property type="expression patterns" value="Expressed in cerebellum and 18 other cell types or tissues"/>
</dbReference>
<dbReference type="GO" id="GO:0005886">
    <property type="term" value="C:plasma membrane"/>
    <property type="evidence" value="ECO:0007669"/>
    <property type="project" value="UniProtKB-SubCell"/>
</dbReference>
<dbReference type="GO" id="GO:0005509">
    <property type="term" value="F:calcium ion binding"/>
    <property type="evidence" value="ECO:0007669"/>
    <property type="project" value="InterPro"/>
</dbReference>
<dbReference type="GO" id="GO:0007156">
    <property type="term" value="P:homophilic cell adhesion via plasma membrane adhesion molecules"/>
    <property type="evidence" value="ECO:0007669"/>
    <property type="project" value="InterPro"/>
</dbReference>
<dbReference type="GO" id="GO:0007399">
    <property type="term" value="P:nervous system development"/>
    <property type="evidence" value="ECO:0007669"/>
    <property type="project" value="UniProtKB-ARBA"/>
</dbReference>
<dbReference type="CDD" id="cd11304">
    <property type="entry name" value="Cadherin_repeat"/>
    <property type="match status" value="6"/>
</dbReference>
<dbReference type="FunFam" id="2.60.40.60:FF:000001">
    <property type="entry name" value="Protocadherin alpha 2"/>
    <property type="match status" value="1"/>
</dbReference>
<dbReference type="FunFam" id="2.60.40.60:FF:000002">
    <property type="entry name" value="Protocadherin alpha 2"/>
    <property type="match status" value="1"/>
</dbReference>
<dbReference type="FunFam" id="2.60.40.60:FF:000003">
    <property type="entry name" value="Protocadherin alpha 2"/>
    <property type="match status" value="1"/>
</dbReference>
<dbReference type="FunFam" id="2.60.40.60:FF:000006">
    <property type="entry name" value="Protocadherin alpha 2"/>
    <property type="match status" value="1"/>
</dbReference>
<dbReference type="FunFam" id="2.60.40.60:FF:000007">
    <property type="entry name" value="Protocadherin alpha 2"/>
    <property type="match status" value="1"/>
</dbReference>
<dbReference type="FunFam" id="2.60.40.60:FF:000076">
    <property type="entry name" value="Protocadherin alpha 2"/>
    <property type="match status" value="1"/>
</dbReference>
<dbReference type="Gene3D" id="2.60.40.60">
    <property type="entry name" value="Cadherins"/>
    <property type="match status" value="6"/>
</dbReference>
<dbReference type="InterPro" id="IPR002126">
    <property type="entry name" value="Cadherin-like_dom"/>
</dbReference>
<dbReference type="InterPro" id="IPR015919">
    <property type="entry name" value="Cadherin-like_sf"/>
</dbReference>
<dbReference type="InterPro" id="IPR031904">
    <property type="entry name" value="Cadherin_CBD"/>
</dbReference>
<dbReference type="InterPro" id="IPR020894">
    <property type="entry name" value="Cadherin_CS"/>
</dbReference>
<dbReference type="InterPro" id="IPR013164">
    <property type="entry name" value="Cadherin_N"/>
</dbReference>
<dbReference type="InterPro" id="IPR050174">
    <property type="entry name" value="Protocadherin/Cadherin-CA"/>
</dbReference>
<dbReference type="PANTHER" id="PTHR24028">
    <property type="entry name" value="CADHERIN-87A"/>
    <property type="match status" value="1"/>
</dbReference>
<dbReference type="PANTHER" id="PTHR24028:SF305">
    <property type="entry name" value="PROTOCADHERIN ALPHA-6-RELATED"/>
    <property type="match status" value="1"/>
</dbReference>
<dbReference type="Pfam" id="PF00028">
    <property type="entry name" value="Cadherin"/>
    <property type="match status" value="5"/>
</dbReference>
<dbReference type="Pfam" id="PF08266">
    <property type="entry name" value="Cadherin_2"/>
    <property type="match status" value="1"/>
</dbReference>
<dbReference type="Pfam" id="PF15974">
    <property type="entry name" value="Cadherin_tail"/>
    <property type="match status" value="1"/>
</dbReference>
<dbReference type="PRINTS" id="PR00205">
    <property type="entry name" value="CADHERIN"/>
</dbReference>
<dbReference type="SMART" id="SM00112">
    <property type="entry name" value="CA"/>
    <property type="match status" value="6"/>
</dbReference>
<dbReference type="SUPFAM" id="SSF49313">
    <property type="entry name" value="Cadherin-like"/>
    <property type="match status" value="6"/>
</dbReference>
<dbReference type="PROSITE" id="PS00232">
    <property type="entry name" value="CADHERIN_1"/>
    <property type="match status" value="5"/>
</dbReference>
<dbReference type="PROSITE" id="PS50268">
    <property type="entry name" value="CADHERIN_2"/>
    <property type="match status" value="6"/>
</dbReference>
<reference key="1">
    <citation type="journal article" date="2005" name="Nature">
        <title>Initial sequence of the chimpanzee genome and comparison with the human genome.</title>
        <authorList>
            <consortium name="Chimpanzee sequencing and analysis consortium"/>
        </authorList>
    </citation>
    <scope>NUCLEOTIDE SEQUENCE [LARGE SCALE GENOMIC DNA]</scope>
</reference>
<reference key="2">
    <citation type="journal article" date="2005" name="Genetics">
        <title>Comparative genomics and diversifying selection of the clustered vertebrate protocadherin genes.</title>
        <authorList>
            <person name="Wu Q."/>
        </authorList>
    </citation>
    <scope>IDENTIFICATION</scope>
</reference>
<name>PCDA6_PANTR</name>
<sequence length="950" mass="102692">MVFTPEDRLGKQCLLLPLLLLAAWKVGSGQLHYSVPEEAKHGTFVGRIAQDLGLELAELVPRLFRMASKDREDLLEVNLQNGILFVNSRIDREELCGRSAECSIHLEVIVDRPLQVFHVDVEVRDINDNPPLFPVEEQRVLIYESRLPDSVFPLEGASDADVGSNSILTYKLSSSEYFGLDVKINSDDNKQIGLLLKKSLDREEAPAHNLFLTATDGGKPELTGTVQLLVTVLDVNDNAPNFEQSEYEVRIFENADNGTTVIKLNASDRDEGANGAISYSFNSLVAAMVIDHFSIDRNTGEIVIRGNLDFEQENFYKIRIDATDKGHPPMAGHCTVLVRILDKNDNVPEIALTSLSLPVREDAQFGTVIALISVNDLDSGANGQVNCSLTPHVPFKLVSTFKNYYSLVLDSALDRESVSAYELVVTARDGGSPSLWATASLSVEVADVNDNAPAFAQPEYTVFVKENNPPGCHIFTVSARDADAQENALVSYSLVERRVGERALSSYISVHAESGKVYALQPLDHEELELLQFQVSARDAGVPPLGSNVTLQVFVLDENDNAPALLAPRVGGTGGAVSELVPRSVGAGQVVAKVRAVDADSGYNAWLSYELQPPASSARFPFRVGLYTGEISTTRVLDEADSPRHRLLVLVKDHGEPALTATATVLVSLVESGQAPKASSRASVGAAGPEAALVDVNVYLIIAICAVSSLLVLTLLLYTALRCSAPSTEGACTADKPTLVCSSAVGSWSYSQQRRQRVCSGEGPPKMDLMAFSPSLSPCPIMMGKAENQDLNEDHDAKPRQPNPDWRYSASLRAGMHSSVHLEEAGILRAGPGGPDQQWPTVSSATPEPEAGEVSPPVGAGVNSNSWTFKYGPGNPKQSGPGELPDKFIIPGSPAIISIRQEPANSQIDKSDFITFGKKEETKKKKKKKKGNKTQEKKEKGNSTTDNSDQ</sequence>
<accession>Q5DRE6</accession>
<feature type="signal peptide" evidence="2">
    <location>
        <begin position="1"/>
        <end position="29"/>
    </location>
</feature>
<feature type="chain" id="PRO_0000003895" description="Protocadherin alpha-6">
    <location>
        <begin position="30"/>
        <end position="950"/>
    </location>
</feature>
<feature type="topological domain" description="Extracellular" evidence="2">
    <location>
        <begin position="30"/>
        <end position="697"/>
    </location>
</feature>
<feature type="transmembrane region" description="Helical" evidence="2">
    <location>
        <begin position="698"/>
        <end position="718"/>
    </location>
</feature>
<feature type="topological domain" description="Cytoplasmic" evidence="2">
    <location>
        <begin position="719"/>
        <end position="950"/>
    </location>
</feature>
<feature type="domain" description="Cadherin 1" evidence="3">
    <location>
        <begin position="34"/>
        <end position="133"/>
    </location>
</feature>
<feature type="domain" description="Cadherin 2" evidence="3">
    <location>
        <begin position="157"/>
        <end position="242"/>
    </location>
</feature>
<feature type="domain" description="Cadherin 3" evidence="3">
    <location>
        <begin position="243"/>
        <end position="350"/>
    </location>
</feature>
<feature type="domain" description="Cadherin 4" evidence="3">
    <location>
        <begin position="351"/>
        <end position="455"/>
    </location>
</feature>
<feature type="domain" description="Cadherin 5" evidence="3">
    <location>
        <begin position="456"/>
        <end position="565"/>
    </location>
</feature>
<feature type="domain" description="Cadherin 6" evidence="3">
    <location>
        <begin position="581"/>
        <end position="678"/>
    </location>
</feature>
<feature type="repeat" description="PXXP 1">
    <location>
        <begin position="799"/>
        <end position="802"/>
    </location>
</feature>
<feature type="repeat" description="PXXP 2">
    <location>
        <begin position="832"/>
        <end position="835"/>
    </location>
</feature>
<feature type="repeat" description="PXXP 3">
    <location>
        <begin position="873"/>
        <end position="876"/>
    </location>
</feature>
<feature type="repeat" description="PXXP 4">
    <location>
        <begin position="891"/>
        <end position="894"/>
    </location>
</feature>
<feature type="region of interest" description="4 X 4 AA repeats of P-X-X-P">
    <location>
        <begin position="799"/>
        <end position="894"/>
    </location>
</feature>
<feature type="region of interest" description="Disordered" evidence="4">
    <location>
        <begin position="830"/>
        <end position="889"/>
    </location>
</feature>
<feature type="region of interest" description="Disordered" evidence="4">
    <location>
        <begin position="901"/>
        <end position="950"/>
    </location>
</feature>
<feature type="compositionally biased region" description="Basic and acidic residues" evidence="4">
    <location>
        <begin position="909"/>
        <end position="923"/>
    </location>
</feature>
<feature type="glycosylation site" description="N-linked (GlcNAc...) asparagine" evidence="2">
    <location>
        <position position="257"/>
    </location>
</feature>
<feature type="glycosylation site" description="N-linked (GlcNAc...) asparagine" evidence="2">
    <location>
        <position position="265"/>
    </location>
</feature>
<feature type="glycosylation site" description="N-linked (GlcNAc...) asparagine" evidence="2">
    <location>
        <position position="386"/>
    </location>
</feature>
<feature type="glycosylation site" description="N-linked (GlcNAc...) asparagine" evidence="2">
    <location>
        <position position="548"/>
    </location>
</feature>
<keyword id="KW-0106">Calcium</keyword>
<keyword id="KW-0130">Cell adhesion</keyword>
<keyword id="KW-1003">Cell membrane</keyword>
<keyword id="KW-0325">Glycoprotein</keyword>
<keyword id="KW-0472">Membrane</keyword>
<keyword id="KW-1185">Reference proteome</keyword>
<keyword id="KW-0677">Repeat</keyword>
<keyword id="KW-0732">Signal</keyword>
<keyword id="KW-0812">Transmembrane</keyword>
<keyword id="KW-1133">Transmembrane helix</keyword>
<organism>
    <name type="scientific">Pan troglodytes</name>
    <name type="common">Chimpanzee</name>
    <dbReference type="NCBI Taxonomy" id="9598"/>
    <lineage>
        <taxon>Eukaryota</taxon>
        <taxon>Metazoa</taxon>
        <taxon>Chordata</taxon>
        <taxon>Craniata</taxon>
        <taxon>Vertebrata</taxon>
        <taxon>Euteleostomi</taxon>
        <taxon>Mammalia</taxon>
        <taxon>Eutheria</taxon>
        <taxon>Euarchontoglires</taxon>
        <taxon>Primates</taxon>
        <taxon>Haplorrhini</taxon>
        <taxon>Catarrhini</taxon>
        <taxon>Hominidae</taxon>
        <taxon>Pan</taxon>
    </lineage>
</organism>
<evidence type="ECO:0000250" key="1"/>
<evidence type="ECO:0000255" key="2"/>
<evidence type="ECO:0000255" key="3">
    <source>
        <dbReference type="PROSITE-ProRule" id="PRU00043"/>
    </source>
</evidence>
<evidence type="ECO:0000256" key="4">
    <source>
        <dbReference type="SAM" id="MobiDB-lite"/>
    </source>
</evidence>
<gene>
    <name type="primary">PCDHA6</name>
</gene>
<protein>
    <recommendedName>
        <fullName>Protocadherin alpha-6</fullName>
        <shortName>PCDH-alpha-6</shortName>
    </recommendedName>
</protein>
<proteinExistence type="inferred from homology"/>
<comment type="function">
    <text>Potential calcium-dependent cell-adhesion protein. May be involved in the establishment and maintenance of specific neuronal connections in the brain.</text>
</comment>
<comment type="subcellular location">
    <subcellularLocation>
        <location evidence="1">Cell membrane</location>
        <topology evidence="1">Single-pass type I membrane protein</topology>
    </subcellularLocation>
</comment>